<sequence length="564" mass="64331">MRRIGAITALSLPVLLSLLYSCGTGGSASKEEILSKKEHNPEPNIPLECYTDTGVVKLGKAIANPCYVCHTKALTPYENEVDDFDLQLVYDFPEEIKEMGNPWLNAIKPELTIGSVPMPSDEEIKTWIRQDNWSKAYAEKGKGELVYFPDIPPIYKYENGSYELINVDKEGFVRDPETGEYTGWRVFKWKPFPGFFPTNGRIDSTFIRLPEKFRKKNGEFDLNLYKKNLAILECAMKGVAPGETCSGTEVGDFIMPFRYEGDASDVEVVVYQYPPGTEFAHPLYYLDPENTLSFKSLRIKEMRYMKKLAYADTRTGTGEEEEEEGTFFWDKGRFFNDSGYWEMRAFIEDKNGYLRPQSPEESKFCIACHGGIGGTVDGTFTLWRKIPGEEGWKEQDYKNIKDYRYKAITCENLDSLEMGEEVKKALEAYCSKVGESPGEYTVYFALTAGGDHFRSNYEILQDISVDGKVDLELLYNPEKIKFIDNSGFIKPELFFPEPERAYGIDKQYYRIVKAQAFIYGRDVFEKAFGISSGGNSLEELDNLESTGVKESGIWNFVKNFLSSE</sequence>
<organism>
    <name type="scientific">Aquifex aeolicus (strain VF5)</name>
    <dbReference type="NCBI Taxonomy" id="224324"/>
    <lineage>
        <taxon>Bacteria</taxon>
        <taxon>Pseudomonadati</taxon>
        <taxon>Aquificota</taxon>
        <taxon>Aquificia</taxon>
        <taxon>Aquificales</taxon>
        <taxon>Aquificaceae</taxon>
        <taxon>Aquifex</taxon>
    </lineage>
</organism>
<gene>
    <name type="ordered locus">aq_1262</name>
</gene>
<name>Y1262_AQUAE</name>
<proteinExistence type="inferred from homology"/>
<dbReference type="EMBL" id="AE000657">
    <property type="protein sequence ID" value="AAC07263.1"/>
    <property type="molecule type" value="Genomic_DNA"/>
</dbReference>
<dbReference type="PIR" id="B70409">
    <property type="entry name" value="B70409"/>
</dbReference>
<dbReference type="RefSeq" id="NP_213865.1">
    <property type="nucleotide sequence ID" value="NC_000918.1"/>
</dbReference>
<dbReference type="RefSeq" id="WP_010880803.1">
    <property type="nucleotide sequence ID" value="NC_000918.1"/>
</dbReference>
<dbReference type="STRING" id="224324.aq_1262"/>
<dbReference type="EnsemblBacteria" id="AAC07263">
    <property type="protein sequence ID" value="AAC07263"/>
    <property type="gene ID" value="aq_1262"/>
</dbReference>
<dbReference type="KEGG" id="aae:aq_1262"/>
<dbReference type="PATRIC" id="fig|224324.8.peg.983"/>
<dbReference type="eggNOG" id="COG2010">
    <property type="taxonomic scope" value="Bacteria"/>
</dbReference>
<dbReference type="HOGENOM" id="CLU_020661_0_0_0"/>
<dbReference type="InParanoid" id="O67301"/>
<dbReference type="OrthoDB" id="8692at2"/>
<dbReference type="Proteomes" id="UP000000798">
    <property type="component" value="Chromosome"/>
</dbReference>
<dbReference type="GO" id="GO:0005886">
    <property type="term" value="C:plasma membrane"/>
    <property type="evidence" value="ECO:0007669"/>
    <property type="project" value="UniProtKB-SubCell"/>
</dbReference>
<dbReference type="PROSITE" id="PS51257">
    <property type="entry name" value="PROKAR_LIPOPROTEIN"/>
    <property type="match status" value="1"/>
</dbReference>
<evidence type="ECO:0000255" key="1">
    <source>
        <dbReference type="PROSITE-ProRule" id="PRU00303"/>
    </source>
</evidence>
<accession>O67301</accession>
<keyword id="KW-1003">Cell membrane</keyword>
<keyword id="KW-0449">Lipoprotein</keyword>
<keyword id="KW-0472">Membrane</keyword>
<keyword id="KW-0564">Palmitate</keyword>
<keyword id="KW-1185">Reference proteome</keyword>
<keyword id="KW-0732">Signal</keyword>
<reference key="1">
    <citation type="journal article" date="1998" name="Nature">
        <title>The complete genome of the hyperthermophilic bacterium Aquifex aeolicus.</title>
        <authorList>
            <person name="Deckert G."/>
            <person name="Warren P.V."/>
            <person name="Gaasterland T."/>
            <person name="Young W.G."/>
            <person name="Lenox A.L."/>
            <person name="Graham D.E."/>
            <person name="Overbeek R."/>
            <person name="Snead M.A."/>
            <person name="Keller M."/>
            <person name="Aujay M."/>
            <person name="Huber R."/>
            <person name="Feldman R.A."/>
            <person name="Short J.M."/>
            <person name="Olsen G.J."/>
            <person name="Swanson R.V."/>
        </authorList>
    </citation>
    <scope>NUCLEOTIDE SEQUENCE [LARGE SCALE GENOMIC DNA]</scope>
    <source>
        <strain>VF5</strain>
    </source>
</reference>
<comment type="subcellular location">
    <subcellularLocation>
        <location evidence="1">Cell membrane</location>
        <topology evidence="1">Lipid-anchor</topology>
    </subcellularLocation>
</comment>
<protein>
    <recommendedName>
        <fullName>Uncharacterized lipoprotein aq_1262</fullName>
    </recommendedName>
</protein>
<feature type="signal peptide" evidence="1">
    <location>
        <begin position="1"/>
        <end position="21"/>
    </location>
</feature>
<feature type="chain" id="PRO_0000013621" description="Uncharacterized lipoprotein aq_1262">
    <location>
        <begin position="22"/>
        <end position="564"/>
    </location>
</feature>
<feature type="lipid moiety-binding region" description="N-palmitoyl cysteine" evidence="1">
    <location>
        <position position="22"/>
    </location>
</feature>
<feature type="lipid moiety-binding region" description="S-diacylglycerol cysteine" evidence="1">
    <location>
        <position position="22"/>
    </location>
</feature>